<reference key="1">
    <citation type="journal article" date="1982" name="Nature">
        <title>Primary structure of the human Met- and Leu-enkephalin precursor and its mRNA.</title>
        <authorList>
            <person name="Comb M."/>
            <person name="Seeburg P.H."/>
            <person name="Adelman J."/>
            <person name="Eiden L."/>
            <person name="Herbert E."/>
        </authorList>
    </citation>
    <scope>NUCLEOTIDE SEQUENCE [GENOMIC DNA]</scope>
    <scope>FUNCTION</scope>
</reference>
<reference key="2">
    <citation type="journal article" date="1982" name="Nature">
        <title>Isolation and structural organization of the human preproenkephalin gene.</title>
        <authorList>
            <person name="Noda M."/>
            <person name="Teranishi Y."/>
            <person name="Takahashi H."/>
            <person name="Toyosato M."/>
            <person name="Notake M."/>
            <person name="Nakanishi S."/>
            <person name="Numa S."/>
        </authorList>
    </citation>
    <scope>NUCLEOTIDE SEQUENCE [GENOMIC DNA]</scope>
</reference>
<reference key="3">
    <citation type="journal article" date="2004" name="Nat. Genet.">
        <title>Complete sequencing and characterization of 21,243 full-length human cDNAs.</title>
        <authorList>
            <person name="Ota T."/>
            <person name="Suzuki Y."/>
            <person name="Nishikawa T."/>
            <person name="Otsuki T."/>
            <person name="Sugiyama T."/>
            <person name="Irie R."/>
            <person name="Wakamatsu A."/>
            <person name="Hayashi K."/>
            <person name="Sato H."/>
            <person name="Nagai K."/>
            <person name="Kimura K."/>
            <person name="Makita H."/>
            <person name="Sekine M."/>
            <person name="Obayashi M."/>
            <person name="Nishi T."/>
            <person name="Shibahara T."/>
            <person name="Tanaka T."/>
            <person name="Ishii S."/>
            <person name="Yamamoto J."/>
            <person name="Saito K."/>
            <person name="Kawai Y."/>
            <person name="Isono Y."/>
            <person name="Nakamura Y."/>
            <person name="Nagahari K."/>
            <person name="Murakami K."/>
            <person name="Yasuda T."/>
            <person name="Iwayanagi T."/>
            <person name="Wagatsuma M."/>
            <person name="Shiratori A."/>
            <person name="Sudo H."/>
            <person name="Hosoiri T."/>
            <person name="Kaku Y."/>
            <person name="Kodaira H."/>
            <person name="Kondo H."/>
            <person name="Sugawara M."/>
            <person name="Takahashi M."/>
            <person name="Kanda K."/>
            <person name="Yokoi T."/>
            <person name="Furuya T."/>
            <person name="Kikkawa E."/>
            <person name="Omura Y."/>
            <person name="Abe K."/>
            <person name="Kamihara K."/>
            <person name="Katsuta N."/>
            <person name="Sato K."/>
            <person name="Tanikawa M."/>
            <person name="Yamazaki M."/>
            <person name="Ninomiya K."/>
            <person name="Ishibashi T."/>
            <person name="Yamashita H."/>
            <person name="Murakawa K."/>
            <person name="Fujimori K."/>
            <person name="Tanai H."/>
            <person name="Kimata M."/>
            <person name="Watanabe M."/>
            <person name="Hiraoka S."/>
            <person name="Chiba Y."/>
            <person name="Ishida S."/>
            <person name="Ono Y."/>
            <person name="Takiguchi S."/>
            <person name="Watanabe S."/>
            <person name="Yosida M."/>
            <person name="Hotuta T."/>
            <person name="Kusano J."/>
            <person name="Kanehori K."/>
            <person name="Takahashi-Fujii A."/>
            <person name="Hara H."/>
            <person name="Tanase T.-O."/>
            <person name="Nomura Y."/>
            <person name="Togiya S."/>
            <person name="Komai F."/>
            <person name="Hara R."/>
            <person name="Takeuchi K."/>
            <person name="Arita M."/>
            <person name="Imose N."/>
            <person name="Musashino K."/>
            <person name="Yuuki H."/>
            <person name="Oshima A."/>
            <person name="Sasaki N."/>
            <person name="Aotsuka S."/>
            <person name="Yoshikawa Y."/>
            <person name="Matsunawa H."/>
            <person name="Ichihara T."/>
            <person name="Shiohata N."/>
            <person name="Sano S."/>
            <person name="Moriya S."/>
            <person name="Momiyama H."/>
            <person name="Satoh N."/>
            <person name="Takami S."/>
            <person name="Terashima Y."/>
            <person name="Suzuki O."/>
            <person name="Nakagawa S."/>
            <person name="Senoh A."/>
            <person name="Mizoguchi H."/>
            <person name="Goto Y."/>
            <person name="Shimizu F."/>
            <person name="Wakebe H."/>
            <person name="Hishigaki H."/>
            <person name="Watanabe T."/>
            <person name="Sugiyama A."/>
            <person name="Takemoto M."/>
            <person name="Kawakami B."/>
            <person name="Yamazaki M."/>
            <person name="Watanabe K."/>
            <person name="Kumagai A."/>
            <person name="Itakura S."/>
            <person name="Fukuzumi Y."/>
            <person name="Fujimori Y."/>
            <person name="Komiyama M."/>
            <person name="Tashiro H."/>
            <person name="Tanigami A."/>
            <person name="Fujiwara T."/>
            <person name="Ono T."/>
            <person name="Yamada K."/>
            <person name="Fujii Y."/>
            <person name="Ozaki K."/>
            <person name="Hirao M."/>
            <person name="Ohmori Y."/>
            <person name="Kawabata A."/>
            <person name="Hikiji T."/>
            <person name="Kobatake N."/>
            <person name="Inagaki H."/>
            <person name="Ikema Y."/>
            <person name="Okamoto S."/>
            <person name="Okitani R."/>
            <person name="Kawakami T."/>
            <person name="Noguchi S."/>
            <person name="Itoh T."/>
            <person name="Shigeta K."/>
            <person name="Senba T."/>
            <person name="Matsumura K."/>
            <person name="Nakajima Y."/>
            <person name="Mizuno T."/>
            <person name="Morinaga M."/>
            <person name="Sasaki M."/>
            <person name="Togashi T."/>
            <person name="Oyama M."/>
            <person name="Hata H."/>
            <person name="Watanabe M."/>
            <person name="Komatsu T."/>
            <person name="Mizushima-Sugano J."/>
            <person name="Satoh T."/>
            <person name="Shirai Y."/>
            <person name="Takahashi Y."/>
            <person name="Nakagawa K."/>
            <person name="Okumura K."/>
            <person name="Nagase T."/>
            <person name="Nomura N."/>
            <person name="Kikuchi H."/>
            <person name="Masuho Y."/>
            <person name="Yamashita R."/>
            <person name="Nakai K."/>
            <person name="Yada T."/>
            <person name="Nakamura Y."/>
            <person name="Ohara O."/>
            <person name="Isogai T."/>
            <person name="Sugano S."/>
        </authorList>
    </citation>
    <scope>NUCLEOTIDE SEQUENCE [LARGE SCALE MRNA]</scope>
    <source>
        <tissue>Cerebellum</tissue>
    </source>
</reference>
<reference key="4">
    <citation type="submission" date="2004-06" db="EMBL/GenBank/DDBJ databases">
        <title>Cloning of human full open reading frames in Gateway(TM) system entry vector (pDONR201).</title>
        <authorList>
            <person name="Halleck A."/>
            <person name="Ebert L."/>
            <person name="Mkoundinya M."/>
            <person name="Schick M."/>
            <person name="Eisenstein S."/>
            <person name="Neubert P."/>
            <person name="Kstrang K."/>
            <person name="Schatten R."/>
            <person name="Shen B."/>
            <person name="Henze S."/>
            <person name="Mar W."/>
            <person name="Korn B."/>
            <person name="Zuo D."/>
            <person name="Hu Y."/>
            <person name="LaBaer J."/>
        </authorList>
    </citation>
    <scope>NUCLEOTIDE SEQUENCE [LARGE SCALE MRNA]</scope>
</reference>
<reference key="5">
    <citation type="submission" date="2005-07" db="EMBL/GenBank/DDBJ databases">
        <authorList>
            <person name="Mural R.J."/>
            <person name="Istrail S."/>
            <person name="Sutton G.G."/>
            <person name="Florea L."/>
            <person name="Halpern A.L."/>
            <person name="Mobarry C.M."/>
            <person name="Lippert R."/>
            <person name="Walenz B."/>
            <person name="Shatkay H."/>
            <person name="Dew I."/>
            <person name="Miller J.R."/>
            <person name="Flanigan M.J."/>
            <person name="Edwards N.J."/>
            <person name="Bolanos R."/>
            <person name="Fasulo D."/>
            <person name="Halldorsson B.V."/>
            <person name="Hannenhalli S."/>
            <person name="Turner R."/>
            <person name="Yooseph S."/>
            <person name="Lu F."/>
            <person name="Nusskern D.R."/>
            <person name="Shue B.C."/>
            <person name="Zheng X.H."/>
            <person name="Zhong F."/>
            <person name="Delcher A.L."/>
            <person name="Huson D.H."/>
            <person name="Kravitz S.A."/>
            <person name="Mouchard L."/>
            <person name="Reinert K."/>
            <person name="Remington K.A."/>
            <person name="Clark A.G."/>
            <person name="Waterman M.S."/>
            <person name="Eichler E.E."/>
            <person name="Adams M.D."/>
            <person name="Hunkapiller M.W."/>
            <person name="Myers E.W."/>
            <person name="Venter J.C."/>
        </authorList>
    </citation>
    <scope>NUCLEOTIDE SEQUENCE [LARGE SCALE GENOMIC DNA]</scope>
</reference>
<reference key="6">
    <citation type="journal article" date="2004" name="Genome Res.">
        <title>The status, quality, and expansion of the NIH full-length cDNA project: the Mammalian Gene Collection (MGC).</title>
        <authorList>
            <consortium name="The MGC Project Team"/>
        </authorList>
    </citation>
    <scope>NUCLEOTIDE SEQUENCE [LARGE SCALE MRNA]</scope>
    <source>
        <tissue>Brain</tissue>
    </source>
</reference>
<reference key="7">
    <citation type="journal article" date="1978" name="Biochem. Pharmacol.">
        <title>Hydrolysis of enkephalin by cultured human endothelial cells and by purified peptidyl dipeptidase.</title>
        <authorList>
            <person name="Erdoes E.G."/>
            <person name="Johnson A.R."/>
            <person name="Boyden N.T."/>
        </authorList>
    </citation>
    <scope>PROTEOLYTIC CLEAVAGE (MET-ENKEPHALIN AND LEU-ENKEPHALIN)</scope>
</reference>
<reference key="8">
    <citation type="journal article" date="1985" name="J. Biol. Chem.">
        <title>Proteolytic conversion of [Met]enkephalin-Arg6-Gly7-Leu8 by brain synaptic membranes. Characterization of formed peptides and mechanism of proteolysis.</title>
        <authorList>
            <person name="Norman J.A."/>
            <person name="Chang J.Y."/>
        </authorList>
    </citation>
    <scope>PROTEOLYTIC CLEAVAGE (MET-ENKEPHALIN-ARG-GLY-LEU)</scope>
</reference>
<reference key="9">
    <citation type="journal article" date="1997" name="Biochem. Biophys. Res. Commun.">
        <title>The structure of synenkephalin (pro-enkephalin 1-73) is dictated by three disulfide bonds.</title>
        <authorList>
            <person name="Lecchi P."/>
            <person name="Loh Y.P."/>
            <person name="Snell C.R."/>
            <person name="Pannell L.K."/>
        </authorList>
    </citation>
    <scope>DISULFIDE BONDS</scope>
</reference>
<protein>
    <recommendedName>
        <fullName evidence="13">Proenkephalin-A</fullName>
    </recommendedName>
    <component>
        <recommendedName>
            <fullName evidence="12">Synenkephalin</fullName>
        </recommendedName>
    </component>
    <component>
        <recommendedName>
            <fullName evidence="11">Met-enkephalin</fullName>
        </recommendedName>
        <alternativeName>
            <fullName>Opioid growth factor</fullName>
            <shortName>OGF</shortName>
        </alternativeName>
    </component>
    <component>
        <recommendedName>
            <fullName evidence="2">PENK(114-133)</fullName>
        </recommendedName>
    </component>
    <component>
        <recommendedName>
            <fullName evidence="2">PENK(143-183)</fullName>
        </recommendedName>
    </component>
    <component>
        <recommendedName>
            <fullName evidence="10">Met-enkephalin-Arg-Gly-Leu</fullName>
        </recommendedName>
    </component>
    <component>
        <recommendedName>
            <fullName evidence="11">Leu-enkephalin</fullName>
        </recommendedName>
    </component>
    <component>
        <recommendedName>
            <fullName evidence="2">PENK(237-258)</fullName>
        </recommendedName>
    </component>
    <component>
        <recommendedName>
            <fullName evidence="3">Met-enkephalin-Arg-Phe</fullName>
        </recommendedName>
    </component>
</protein>
<gene>
    <name evidence="15" type="primary">PENK</name>
</gene>
<evidence type="ECO:0000250" key="1">
    <source>
        <dbReference type="UniProtKB" id="P01211"/>
    </source>
</evidence>
<evidence type="ECO:0000250" key="2">
    <source>
        <dbReference type="UniProtKB" id="P04094"/>
    </source>
</evidence>
<evidence type="ECO:0000250" key="3">
    <source>
        <dbReference type="UniProtKB" id="P22005"/>
    </source>
</evidence>
<evidence type="ECO:0000255" key="4"/>
<evidence type="ECO:0000256" key="5">
    <source>
        <dbReference type="SAM" id="MobiDB-lite"/>
    </source>
</evidence>
<evidence type="ECO:0000269" key="6">
    <source>
    </source>
</evidence>
<evidence type="ECO:0000269" key="7">
    <source>
    </source>
</evidence>
<evidence type="ECO:0000269" key="8">
    <source>
    </source>
</evidence>
<evidence type="ECO:0000269" key="9">
    <source>
    </source>
</evidence>
<evidence type="ECO:0000303" key="10">
    <source>
    </source>
</evidence>
<evidence type="ECO:0000303" key="11">
    <source>
    </source>
</evidence>
<evidence type="ECO:0000303" key="12">
    <source>
    </source>
</evidence>
<evidence type="ECO:0000305" key="13"/>
<evidence type="ECO:0000305" key="14">
    <source>
    </source>
</evidence>
<evidence type="ECO:0000312" key="15">
    <source>
        <dbReference type="HGNC" id="HGNC:8831"/>
    </source>
</evidence>
<evidence type="ECO:0007829" key="16">
    <source>
        <dbReference type="PDB" id="2LWC"/>
    </source>
</evidence>
<evidence type="ECO:0007829" key="17">
    <source>
        <dbReference type="PDB" id="8JGF"/>
    </source>
</evidence>
<dbReference type="EMBL" id="V00509">
    <property type="protein sequence ID" value="CAA23767.1"/>
    <property type="molecule type" value="Genomic_DNA"/>
</dbReference>
<dbReference type="EMBL" id="J00123">
    <property type="protein sequence ID" value="AAB59409.1"/>
    <property type="molecule type" value="Genomic_DNA"/>
</dbReference>
<dbReference type="EMBL" id="J00122">
    <property type="protein sequence ID" value="AAB59409.1"/>
    <property type="status" value="JOINED"/>
    <property type="molecule type" value="Genomic_DNA"/>
</dbReference>
<dbReference type="EMBL" id="AK314908">
    <property type="protein sequence ID" value="BAG37420.1"/>
    <property type="molecule type" value="mRNA"/>
</dbReference>
<dbReference type="EMBL" id="CR541808">
    <property type="protein sequence ID" value="CAG46607.1"/>
    <property type="molecule type" value="mRNA"/>
</dbReference>
<dbReference type="EMBL" id="CR541828">
    <property type="protein sequence ID" value="CAG46627.1"/>
    <property type="molecule type" value="mRNA"/>
</dbReference>
<dbReference type="EMBL" id="CH471068">
    <property type="protein sequence ID" value="EAW86785.1"/>
    <property type="molecule type" value="Genomic_DNA"/>
</dbReference>
<dbReference type="EMBL" id="BC032505">
    <property type="protein sequence ID" value="AAH32505.1"/>
    <property type="molecule type" value="mRNA"/>
</dbReference>
<dbReference type="CCDS" id="CCDS6168.1"/>
<dbReference type="PIR" id="A93278">
    <property type="entry name" value="EQHUA"/>
</dbReference>
<dbReference type="RefSeq" id="NP_001129162.1">
    <property type="nucleotide sequence ID" value="NM_001135690.3"/>
</dbReference>
<dbReference type="PDB" id="1PLW">
    <property type="method" value="NMR"/>
    <property type="chains" value="A=100-104"/>
</dbReference>
<dbReference type="PDB" id="1PLX">
    <property type="method" value="NMR"/>
    <property type="chains" value="A=100-104"/>
</dbReference>
<dbReference type="PDB" id="2LWC">
    <property type="method" value="NMR"/>
    <property type="chains" value="A=261-265"/>
</dbReference>
<dbReference type="PDB" id="5E33">
    <property type="method" value="X-ray"/>
    <property type="resolution" value="1.84 A"/>
    <property type="chains" value="B=261-265"/>
</dbReference>
<dbReference type="PDB" id="5E3A">
    <property type="method" value="X-ray"/>
    <property type="resolution" value="2.05 A"/>
    <property type="chains" value="B=230-234"/>
</dbReference>
<dbReference type="PDB" id="8JGF">
    <property type="method" value="EM"/>
    <property type="resolution" value="2.70 A"/>
    <property type="chains" value="L=217-231"/>
</dbReference>
<dbReference type="PDB" id="8JGG">
    <property type="method" value="EM"/>
    <property type="resolution" value="3.00 A"/>
    <property type="chains" value="L=220-230"/>
</dbReference>
<dbReference type="PDBsum" id="1PLW"/>
<dbReference type="PDBsum" id="1PLX"/>
<dbReference type="PDBsum" id="2LWC"/>
<dbReference type="PDBsum" id="5E33"/>
<dbReference type="PDBsum" id="5E3A"/>
<dbReference type="PDBsum" id="8JGF"/>
<dbReference type="PDBsum" id="8JGG"/>
<dbReference type="EMDB" id="EMD-36233"/>
<dbReference type="SMR" id="P01210"/>
<dbReference type="BioGRID" id="111205">
    <property type="interactions" value="10"/>
</dbReference>
<dbReference type="FunCoup" id="P01210">
    <property type="interactions" value="377"/>
</dbReference>
<dbReference type="IntAct" id="P01210">
    <property type="interactions" value="11"/>
</dbReference>
<dbReference type="STRING" id="9606.ENSP00000400894"/>
<dbReference type="TCDB" id="1.C.89.1.2">
    <property type="family name" value="the dynorphin channel-forming neuropeptide (dynorphin) family"/>
</dbReference>
<dbReference type="iPTMnet" id="P01210"/>
<dbReference type="PhosphoSitePlus" id="P01210"/>
<dbReference type="BioMuta" id="PENK"/>
<dbReference type="DMDM" id="129770"/>
<dbReference type="MassIVE" id="P01210"/>
<dbReference type="PaxDb" id="9606-ENSP00000324248"/>
<dbReference type="PeptideAtlas" id="P01210"/>
<dbReference type="ProteomicsDB" id="51344"/>
<dbReference type="Antibodypedia" id="2211">
    <property type="antibodies" value="369 antibodies from 36 providers"/>
</dbReference>
<dbReference type="DNASU" id="5179"/>
<dbReference type="Ensembl" id="ENST00000314922.3">
    <property type="protein sequence ID" value="ENSP00000324248.3"/>
    <property type="gene ID" value="ENSG00000181195.11"/>
</dbReference>
<dbReference type="Ensembl" id="ENST00000451791.7">
    <property type="protein sequence ID" value="ENSP00000400894.2"/>
    <property type="gene ID" value="ENSG00000181195.11"/>
</dbReference>
<dbReference type="GeneID" id="5179"/>
<dbReference type="KEGG" id="hsa:5179"/>
<dbReference type="MANE-Select" id="ENST00000451791.7">
    <property type="protein sequence ID" value="ENSP00000400894.2"/>
    <property type="RefSeq nucleotide sequence ID" value="NM_001135690.3"/>
    <property type="RefSeq protein sequence ID" value="NP_001129162.1"/>
</dbReference>
<dbReference type="UCSC" id="uc003xsz.3">
    <property type="organism name" value="human"/>
</dbReference>
<dbReference type="AGR" id="HGNC:8831"/>
<dbReference type="CTD" id="5179"/>
<dbReference type="DisGeNET" id="5179"/>
<dbReference type="GeneCards" id="PENK"/>
<dbReference type="HGNC" id="HGNC:8831">
    <property type="gene designation" value="PENK"/>
</dbReference>
<dbReference type="HPA" id="ENSG00000181195">
    <property type="expression patterns" value="Group enriched (adrenal gland, brain)"/>
</dbReference>
<dbReference type="MIM" id="131330">
    <property type="type" value="gene"/>
</dbReference>
<dbReference type="neXtProt" id="NX_P01210"/>
<dbReference type="OpenTargets" id="ENSG00000181195"/>
<dbReference type="PharmGKB" id="PA33176"/>
<dbReference type="VEuPathDB" id="HostDB:ENSG00000181195"/>
<dbReference type="eggNOG" id="ENOG502QWWK">
    <property type="taxonomic scope" value="Eukaryota"/>
</dbReference>
<dbReference type="GeneTree" id="ENSGT00950000183149"/>
<dbReference type="HOGENOM" id="CLU_070973_0_0_1"/>
<dbReference type="InParanoid" id="P01210"/>
<dbReference type="OMA" id="NPEAGHY"/>
<dbReference type="OrthoDB" id="9928775at2759"/>
<dbReference type="PAN-GO" id="P01210">
    <property type="GO annotations" value="8 GO annotations based on evolutionary models"/>
</dbReference>
<dbReference type="PhylomeDB" id="P01210"/>
<dbReference type="TreeFam" id="TF332620"/>
<dbReference type="PathwayCommons" id="P01210"/>
<dbReference type="Reactome" id="R-HSA-375276">
    <property type="pathway name" value="Peptide ligand-binding receptors"/>
</dbReference>
<dbReference type="Reactome" id="R-HSA-381426">
    <property type="pathway name" value="Regulation of Insulin-like Growth Factor (IGF) transport and uptake by Insulin-like Growth Factor Binding Proteins (IGFBPs)"/>
</dbReference>
<dbReference type="Reactome" id="R-HSA-418594">
    <property type="pathway name" value="G alpha (i) signalling events"/>
</dbReference>
<dbReference type="Reactome" id="R-HSA-8957275">
    <property type="pathway name" value="Post-translational protein phosphorylation"/>
</dbReference>
<dbReference type="SignaLink" id="P01210"/>
<dbReference type="SIGNOR" id="P01210"/>
<dbReference type="BioGRID-ORCS" id="5179">
    <property type="hits" value="7 hits in 1140 CRISPR screens"/>
</dbReference>
<dbReference type="ChiTaRS" id="PENK">
    <property type="organism name" value="human"/>
</dbReference>
<dbReference type="EvolutionaryTrace" id="P01210"/>
<dbReference type="GenomeRNAi" id="5179"/>
<dbReference type="Pharos" id="P01210">
    <property type="development level" value="Tbio"/>
</dbReference>
<dbReference type="PRO" id="PR:P01210"/>
<dbReference type="Proteomes" id="UP000005640">
    <property type="component" value="Chromosome 8"/>
</dbReference>
<dbReference type="RNAct" id="P01210">
    <property type="molecule type" value="protein"/>
</dbReference>
<dbReference type="Bgee" id="ENSG00000181195">
    <property type="expression patterns" value="Expressed in nucleus accumbens and 166 other cell types or tissues"/>
</dbReference>
<dbReference type="ExpressionAtlas" id="P01210">
    <property type="expression patterns" value="baseline and differential"/>
</dbReference>
<dbReference type="GO" id="GO:0043679">
    <property type="term" value="C:axon terminus"/>
    <property type="evidence" value="ECO:0000318"/>
    <property type="project" value="GO_Central"/>
</dbReference>
<dbReference type="GO" id="GO:0070852">
    <property type="term" value="C:cell body fiber"/>
    <property type="evidence" value="ECO:0007669"/>
    <property type="project" value="Ensembl"/>
</dbReference>
<dbReference type="GO" id="GO:0034466">
    <property type="term" value="C:chromaffin granule lumen"/>
    <property type="evidence" value="ECO:0007669"/>
    <property type="project" value="UniProtKB-SubCell"/>
</dbReference>
<dbReference type="GO" id="GO:0030425">
    <property type="term" value="C:dendrite"/>
    <property type="evidence" value="ECO:0000318"/>
    <property type="project" value="GO_Central"/>
</dbReference>
<dbReference type="GO" id="GO:0005788">
    <property type="term" value="C:endoplasmic reticulum lumen"/>
    <property type="evidence" value="ECO:0000304"/>
    <property type="project" value="Reactome"/>
</dbReference>
<dbReference type="GO" id="GO:0005576">
    <property type="term" value="C:extracellular region"/>
    <property type="evidence" value="ECO:0000304"/>
    <property type="project" value="Reactome"/>
</dbReference>
<dbReference type="GO" id="GO:0043025">
    <property type="term" value="C:neuronal cell body"/>
    <property type="evidence" value="ECO:0000318"/>
    <property type="project" value="GO_Central"/>
</dbReference>
<dbReference type="GO" id="GO:0099013">
    <property type="term" value="C:neuronal dense core vesicle lumen"/>
    <property type="evidence" value="ECO:0007669"/>
    <property type="project" value="Ensembl"/>
</dbReference>
<dbReference type="GO" id="GO:0043204">
    <property type="term" value="C:perikaryon"/>
    <property type="evidence" value="ECO:0007669"/>
    <property type="project" value="Ensembl"/>
</dbReference>
<dbReference type="GO" id="GO:0005886">
    <property type="term" value="C:plasma membrane"/>
    <property type="evidence" value="ECO:0000318"/>
    <property type="project" value="GO_Central"/>
</dbReference>
<dbReference type="GO" id="GO:0032280">
    <property type="term" value="C:symmetric synapse"/>
    <property type="evidence" value="ECO:0007669"/>
    <property type="project" value="Ensembl"/>
</dbReference>
<dbReference type="GO" id="GO:0034592">
    <property type="term" value="C:synaptic vesicle lumen"/>
    <property type="evidence" value="ECO:0007669"/>
    <property type="project" value="Ensembl"/>
</dbReference>
<dbReference type="GO" id="GO:0005184">
    <property type="term" value="F:neuropeptide hormone activity"/>
    <property type="evidence" value="ECO:0000304"/>
    <property type="project" value="ProtInc"/>
</dbReference>
<dbReference type="GO" id="GO:0001515">
    <property type="term" value="F:opioid peptide activity"/>
    <property type="evidence" value="ECO:0007669"/>
    <property type="project" value="UniProtKB-KW"/>
</dbReference>
<dbReference type="GO" id="GO:0002118">
    <property type="term" value="P:aggressive behavior"/>
    <property type="evidence" value="ECO:0007669"/>
    <property type="project" value="Ensembl"/>
</dbReference>
<dbReference type="GO" id="GO:0001662">
    <property type="term" value="P:behavioral fear response"/>
    <property type="evidence" value="ECO:0007669"/>
    <property type="project" value="Ensembl"/>
</dbReference>
<dbReference type="GO" id="GO:0071320">
    <property type="term" value="P:cellular response to cAMP"/>
    <property type="evidence" value="ECO:0007669"/>
    <property type="project" value="Ensembl"/>
</dbReference>
<dbReference type="GO" id="GO:0034599">
    <property type="term" value="P:cellular response to oxidative stress"/>
    <property type="evidence" value="ECO:0007669"/>
    <property type="project" value="Ensembl"/>
</dbReference>
<dbReference type="GO" id="GO:0071560">
    <property type="term" value="P:cellular response to transforming growth factor beta stimulus"/>
    <property type="evidence" value="ECO:0007669"/>
    <property type="project" value="Ensembl"/>
</dbReference>
<dbReference type="GO" id="GO:0098586">
    <property type="term" value="P:cellular response to virus"/>
    <property type="evidence" value="ECO:0007669"/>
    <property type="project" value="Ensembl"/>
</dbReference>
<dbReference type="GO" id="GO:0071305">
    <property type="term" value="P:cellular response to vitamin D"/>
    <property type="evidence" value="ECO:0007669"/>
    <property type="project" value="Ensembl"/>
</dbReference>
<dbReference type="GO" id="GO:0007268">
    <property type="term" value="P:chemical synaptic transmission"/>
    <property type="evidence" value="ECO:0000318"/>
    <property type="project" value="GO_Central"/>
</dbReference>
<dbReference type="GO" id="GO:0038003">
    <property type="term" value="P:G protein-coupled opioid receptor signaling pathway"/>
    <property type="evidence" value="ECO:0007669"/>
    <property type="project" value="Ensembl"/>
</dbReference>
<dbReference type="GO" id="GO:0051867">
    <property type="term" value="P:general adaptation syndrome, behavioral process"/>
    <property type="evidence" value="ECO:0007669"/>
    <property type="project" value="Ensembl"/>
</dbReference>
<dbReference type="GO" id="GO:0014009">
    <property type="term" value="P:glial cell proliferation"/>
    <property type="evidence" value="ECO:0007669"/>
    <property type="project" value="Ensembl"/>
</dbReference>
<dbReference type="GO" id="GO:0035641">
    <property type="term" value="P:locomotory exploration behavior"/>
    <property type="evidence" value="ECO:0007669"/>
    <property type="project" value="Ensembl"/>
</dbReference>
<dbReference type="GO" id="GO:0007218">
    <property type="term" value="P:neuropeptide signaling pathway"/>
    <property type="evidence" value="ECO:0000318"/>
    <property type="project" value="GO_Central"/>
</dbReference>
<dbReference type="GO" id="GO:0001649">
    <property type="term" value="P:osteoblast differentiation"/>
    <property type="evidence" value="ECO:0007669"/>
    <property type="project" value="Ensembl"/>
</dbReference>
<dbReference type="GO" id="GO:2000987">
    <property type="term" value="P:positive regulation of behavioral fear response"/>
    <property type="evidence" value="ECO:0007669"/>
    <property type="project" value="Ensembl"/>
</dbReference>
<dbReference type="GO" id="GO:0051592">
    <property type="term" value="P:response to calcium ion"/>
    <property type="evidence" value="ECO:0007669"/>
    <property type="project" value="Ensembl"/>
</dbReference>
<dbReference type="GO" id="GO:0071871">
    <property type="term" value="P:response to epinephrine"/>
    <property type="evidence" value="ECO:0007669"/>
    <property type="project" value="Ensembl"/>
</dbReference>
<dbReference type="GO" id="GO:0032355">
    <property type="term" value="P:response to estradiol"/>
    <property type="evidence" value="ECO:0007669"/>
    <property type="project" value="Ensembl"/>
</dbReference>
<dbReference type="GO" id="GO:0045471">
    <property type="term" value="P:response to ethanol"/>
    <property type="evidence" value="ECO:0007669"/>
    <property type="project" value="Ensembl"/>
</dbReference>
<dbReference type="GO" id="GO:0001666">
    <property type="term" value="P:response to hypoxia"/>
    <property type="evidence" value="ECO:0007669"/>
    <property type="project" value="Ensembl"/>
</dbReference>
<dbReference type="GO" id="GO:0035902">
    <property type="term" value="P:response to immobilization stress"/>
    <property type="evidence" value="ECO:0007669"/>
    <property type="project" value="Ensembl"/>
</dbReference>
<dbReference type="GO" id="GO:0032496">
    <property type="term" value="P:response to lipopolysaccharide"/>
    <property type="evidence" value="ECO:0007669"/>
    <property type="project" value="Ensembl"/>
</dbReference>
<dbReference type="GO" id="GO:0035094">
    <property type="term" value="P:response to nicotine"/>
    <property type="evidence" value="ECO:0007669"/>
    <property type="project" value="Ensembl"/>
</dbReference>
<dbReference type="GO" id="GO:0009636">
    <property type="term" value="P:response to toxic substance"/>
    <property type="evidence" value="ECO:0007669"/>
    <property type="project" value="Ensembl"/>
</dbReference>
<dbReference type="GO" id="GO:0007600">
    <property type="term" value="P:sensory perception"/>
    <property type="evidence" value="ECO:0000318"/>
    <property type="project" value="GO_Central"/>
</dbReference>
<dbReference type="GO" id="GO:0019233">
    <property type="term" value="P:sensory perception of pain"/>
    <property type="evidence" value="ECO:0007669"/>
    <property type="project" value="Ensembl"/>
</dbReference>
<dbReference type="GO" id="GO:0007165">
    <property type="term" value="P:signal transduction"/>
    <property type="evidence" value="ECO:0000304"/>
    <property type="project" value="ProtInc"/>
</dbReference>
<dbReference type="GO" id="GO:0001964">
    <property type="term" value="P:startle response"/>
    <property type="evidence" value="ECO:0007669"/>
    <property type="project" value="Ensembl"/>
</dbReference>
<dbReference type="GO" id="GO:0099538">
    <property type="term" value="P:synaptic signaling via neuropeptide"/>
    <property type="evidence" value="ECO:0007669"/>
    <property type="project" value="Ensembl"/>
</dbReference>
<dbReference type="GO" id="GO:0019226">
    <property type="term" value="P:transmission of nerve impulse"/>
    <property type="evidence" value="ECO:0007669"/>
    <property type="project" value="Ensembl"/>
</dbReference>
<dbReference type="InterPro" id="IPR006024">
    <property type="entry name" value="Opioid_neupept"/>
</dbReference>
<dbReference type="InterPro" id="IPR000703">
    <property type="entry name" value="Proenkphlin_A"/>
</dbReference>
<dbReference type="PANTHER" id="PTHR11438">
    <property type="entry name" value="PROENKEPHALIN"/>
    <property type="match status" value="1"/>
</dbReference>
<dbReference type="PANTHER" id="PTHR11438:SF3">
    <property type="entry name" value="PROENKEPHALIN-A"/>
    <property type="match status" value="1"/>
</dbReference>
<dbReference type="Pfam" id="PF01160">
    <property type="entry name" value="Opiods_neuropep"/>
    <property type="match status" value="1"/>
</dbReference>
<dbReference type="PRINTS" id="PR01028">
    <property type="entry name" value="OPIOIDPRCRSR"/>
</dbReference>
<dbReference type="PRINTS" id="PR01029">
    <property type="entry name" value="PENKAPRCRSR"/>
</dbReference>
<dbReference type="PROSITE" id="PS01252">
    <property type="entry name" value="OPIOIDS_PRECURSOR"/>
    <property type="match status" value="1"/>
</dbReference>
<name>PENK_HUMAN</name>
<proteinExistence type="evidence at protein level"/>
<sequence length="267" mass="30787">MARFLTLCTWLLLLGPGLLATVRAECSQDCATCSYRLVRPADINFLACVMECEGKLPSLKIWETCKELLQLSKPELPQDGTSTLRENSKPEESHLLAKRYGGFMKRYGGFMKKMDELYPMEPEEEANGSEILAKRYGGFMKKDAEEDDSLANSSDLLKELLETGDNRERSHHQDGSDNEEEVSKRYGGFMRGLKRSPQLEDEAKELQKRYGGFMRRVGRPEWWMDYQKRYGGFLKRFAEALPSDEEGESYSKEVPEMEKRYGGFMRF</sequence>
<accession>P01210</accession>
<accession>B2RC23</accession>
<accession>Q6FHC6</accession>
<accession>Q6FHE6</accession>
<comment type="function">
    <molecule>Met-enkephalin</molecule>
    <text evidence="8">Neuropeptide that competes with and mimic the effects of opiate drugs. They play a role in a number of physiologic functions, including pain perception and responses to stress.</text>
</comment>
<comment type="function">
    <molecule>Leu-enkephalin</molecule>
    <text evidence="8">Neuropeptide that competes with and mimic the effects of opiate drugs. They play a role in a number of physiologic functions, including pain perception and responses to stress.</text>
</comment>
<comment type="function">
    <molecule>Met-enkephalin-Arg-Phe</molecule>
    <text evidence="3">Met-enkephalin-Arg-Phe neuropeptide acts as a strong ligand of Mu-type opioid receptor OPRM1. Met-enkephalin-Arg-Phe-binding to OPRM1 in the nucleus accumbens of the brain increases activation of OPRM1, leading to long-term synaptic depression of glutamate release.</text>
</comment>
<comment type="function">
    <molecule>PENK(114-133)</molecule>
    <text evidence="2">Increases glutamate release in the striatum and decreases GABA concentration in the striatum.</text>
</comment>
<comment type="function">
    <molecule>PENK(237-258)</molecule>
    <text evidence="2">Increases glutamate release in the striatum.</text>
</comment>
<comment type="interaction">
    <interactant intactId="EBI-6656055">
        <id>PRO_0000008243</id>
    </interactant>
    <interactant intactId="EBI-2624570">
        <id>P35372</id>
        <label>OPRM1</label>
    </interactant>
    <organismsDiffer>false</organismsDiffer>
    <experiments>3</experiments>
</comment>
<comment type="subcellular location">
    <subcellularLocation>
        <location evidence="1">Cytoplasmic vesicle</location>
        <location evidence="1">Secretory vesicle</location>
        <location evidence="1">Chromaffin granule lumen</location>
    </subcellularLocation>
    <subcellularLocation>
        <location evidence="1">Secreted</location>
    </subcellularLocation>
</comment>
<comment type="PTM">
    <text evidence="1">Proenkephalin-A is cleaved by CTSL to generate Met-enkephalin.</text>
</comment>
<comment type="PTM">
    <molecule>Met-enkephalin</molecule>
    <text evidence="7">Processed and degraded by ACE.</text>
</comment>
<comment type="PTM">
    <molecule>Leu-enkephalin</molecule>
    <text evidence="7">Processed and degraded by ACE.</text>
</comment>
<comment type="PTM">
    <molecule>Met-enkephalin-Arg-Gly-Leu</molecule>
    <text evidence="14">Probably cleaved by ACE.</text>
</comment>
<comment type="PTM">
    <molecule>Met-enkephalin-Arg-Phe</molecule>
    <text evidence="2">Processed by ACE to generate Met-enkephalin in the nucleus accumbens of the brain.</text>
</comment>
<comment type="PTM">
    <text evidence="9">The N-terminal domain contains 6 conserved cysteines thought to be involved in disulfide bonding and/or processing.</text>
</comment>
<comment type="similarity">
    <text evidence="13">Belongs to the opioid neuropeptide precursor family.</text>
</comment>
<feature type="signal peptide" evidence="4">
    <location>
        <begin position="1"/>
        <end position="24"/>
    </location>
</feature>
<feature type="peptide" id="PRO_0000008242" description="Synenkephalin">
    <location>
        <begin position="25"/>
        <end position="97"/>
    </location>
</feature>
<feature type="peptide" id="PRO_0000008243" description="Met-enkephalin" evidence="7">
    <location>
        <begin position="100"/>
        <end position="104"/>
    </location>
</feature>
<feature type="peptide" id="PRO_0000008244" description="Met-enkephalin" evidence="7">
    <location>
        <begin position="107"/>
        <end position="111"/>
    </location>
</feature>
<feature type="peptide" id="PRO_0000377691" description="PENK(114-133)" evidence="2">
    <location>
        <begin position="114"/>
        <end position="133"/>
    </location>
</feature>
<feature type="peptide" id="PRO_0000008246" description="Met-enkephalin">
    <location>
        <begin position="136"/>
        <end position="140"/>
    </location>
</feature>
<feature type="peptide" id="PRO_0000377692" description="PENK(143-183)" evidence="2">
    <location>
        <begin position="143"/>
        <end position="183"/>
    </location>
</feature>
<feature type="peptide" id="PRO_0000008248" description="Met-enkephalin-Arg-Gly-Leu" evidence="6">
    <location>
        <begin position="186"/>
        <end position="193"/>
    </location>
</feature>
<feature type="propeptide" id="PRO_0000008249">
    <location>
        <begin position="196"/>
        <end position="207"/>
    </location>
</feature>
<feature type="peptide" id="PRO_0000008250" description="Met-enkephalin">
    <location>
        <begin position="210"/>
        <end position="214"/>
    </location>
</feature>
<feature type="propeptide" id="PRO_0000008251">
    <location>
        <begin position="217"/>
        <end position="227"/>
    </location>
</feature>
<feature type="peptide" id="PRO_0000008252" description="Leu-enkephalin">
    <location>
        <begin position="230"/>
        <end position="234"/>
    </location>
</feature>
<feature type="peptide" id="PRO_0000377693" description="PENK(237-258)" evidence="2">
    <location>
        <begin position="237"/>
        <end position="258"/>
    </location>
</feature>
<feature type="peptide" id="PRO_0000008254" description="Met-enkephalin-Arg-Phe" evidence="2">
    <location>
        <begin position="261"/>
        <end position="267"/>
    </location>
</feature>
<feature type="region of interest" description="Disordered" evidence="5">
    <location>
        <begin position="163"/>
        <end position="182"/>
    </location>
</feature>
<feature type="compositionally biased region" description="Basic and acidic residues" evidence="5">
    <location>
        <begin position="163"/>
        <end position="175"/>
    </location>
</feature>
<feature type="site" description="Cleavage; by CTSL" evidence="1">
    <location>
        <begin position="111"/>
        <end position="112"/>
    </location>
</feature>
<feature type="site" description="Cleavage; by CTSL" evidence="1">
    <location>
        <begin position="112"/>
        <end position="113"/>
    </location>
</feature>
<feature type="site" description="Cleavage; by CTSL" evidence="1">
    <location>
        <begin position="133"/>
        <end position="134"/>
    </location>
</feature>
<feature type="site" description="Cleavage; by CTSL" evidence="1">
    <location>
        <begin position="214"/>
        <end position="215"/>
    </location>
</feature>
<feature type="site" description="Cleavage; by CTSL" evidence="1">
    <location>
        <begin position="215"/>
        <end position="216"/>
    </location>
</feature>
<feature type="site" description="Cleavage; by CTSL" evidence="1">
    <location>
        <begin position="218"/>
        <end position="219"/>
    </location>
</feature>
<feature type="modified residue" description="Phosphoserine" evidence="2">
    <location>
        <position position="251"/>
    </location>
</feature>
<feature type="disulfide bond" evidence="9">
    <location>
        <begin position="26"/>
        <end position="48"/>
    </location>
</feature>
<feature type="disulfide bond" evidence="9">
    <location>
        <begin position="30"/>
        <end position="52"/>
    </location>
</feature>
<feature type="disulfide bond" evidence="9">
    <location>
        <begin position="33"/>
        <end position="65"/>
    </location>
</feature>
<feature type="sequence variant" id="VAR_048935" description="In dbSNP:rs11998459.">
    <original>T</original>
    <variation>N</variation>
    <location>
        <position position="83"/>
    </location>
</feature>
<feature type="sequence variant" id="VAR_014584" description="In dbSNP:rs1800567.">
    <original>G</original>
    <variation>D</variation>
    <location>
        <position position="247"/>
    </location>
</feature>
<feature type="sequence conflict" description="In Ref. 4; CAG46627." evidence="13" ref="4">
    <original>P</original>
    <variation>S</variation>
    <location>
        <position position="119"/>
    </location>
</feature>
<feature type="sequence conflict" description="In Ref. 4; CAG46607." evidence="13" ref="4">
    <original>N</original>
    <variation>I</variation>
    <location>
        <position position="152"/>
    </location>
</feature>
<feature type="turn" evidence="17">
    <location>
        <begin position="225"/>
        <end position="227"/>
    </location>
</feature>
<feature type="turn" evidence="16">
    <location>
        <begin position="262"/>
        <end position="264"/>
    </location>
</feature>
<keyword id="KW-0002">3D-structure</keyword>
<keyword id="KW-0165">Cleavage on pair of basic residues</keyword>
<keyword id="KW-0968">Cytoplasmic vesicle</keyword>
<keyword id="KW-1015">Disulfide bond</keyword>
<keyword id="KW-0257">Endorphin</keyword>
<keyword id="KW-0527">Neuropeptide</keyword>
<keyword id="KW-0555">Opioid peptide</keyword>
<keyword id="KW-0597">Phosphoprotein</keyword>
<keyword id="KW-1267">Proteomics identification</keyword>
<keyword id="KW-1185">Reference proteome</keyword>
<keyword id="KW-0964">Secreted</keyword>
<keyword id="KW-0732">Signal</keyword>
<organism>
    <name type="scientific">Homo sapiens</name>
    <name type="common">Human</name>
    <dbReference type="NCBI Taxonomy" id="9606"/>
    <lineage>
        <taxon>Eukaryota</taxon>
        <taxon>Metazoa</taxon>
        <taxon>Chordata</taxon>
        <taxon>Craniata</taxon>
        <taxon>Vertebrata</taxon>
        <taxon>Euteleostomi</taxon>
        <taxon>Mammalia</taxon>
        <taxon>Eutheria</taxon>
        <taxon>Euarchontoglires</taxon>
        <taxon>Primates</taxon>
        <taxon>Haplorrhini</taxon>
        <taxon>Catarrhini</taxon>
        <taxon>Hominidae</taxon>
        <taxon>Homo</taxon>
    </lineage>
</organism>